<sequence length="120" mass="13776">MVYDFKAEIVKAKNSGSHHWLLQRVTGIILALCSIWLIYFTLTNKNNDINIIMWELKKPFNVVALLITVAISLYHAMLGMRVVIEDYVSCHKLRNTLIVIVQLFCIVTIAAFVVAMFYRG</sequence>
<name>DHSD_RICFE</name>
<gene>
    <name type="primary">sdhD</name>
    <name type="ordered locus">RF_1161</name>
</gene>
<reference key="1">
    <citation type="journal article" date="2005" name="PLoS Biol.">
        <title>The genome sequence of Rickettsia felis identifies the first putative conjugative plasmid in an obligate intracellular parasite.</title>
        <authorList>
            <person name="Ogata H."/>
            <person name="Renesto P."/>
            <person name="Audic S."/>
            <person name="Robert C."/>
            <person name="Blanc G."/>
            <person name="Fournier P.-E."/>
            <person name="Parinello H."/>
            <person name="Claverie J.-M."/>
            <person name="Raoult D."/>
        </authorList>
    </citation>
    <scope>NUCLEOTIDE SEQUENCE [LARGE SCALE GENOMIC DNA]</scope>
    <source>
        <strain>ATCC VR-1525 / URRWXCal2</strain>
    </source>
</reference>
<keyword id="KW-0997">Cell inner membrane</keyword>
<keyword id="KW-1003">Cell membrane</keyword>
<keyword id="KW-0249">Electron transport</keyword>
<keyword id="KW-0349">Heme</keyword>
<keyword id="KW-0408">Iron</keyword>
<keyword id="KW-0472">Membrane</keyword>
<keyword id="KW-0479">Metal-binding</keyword>
<keyword id="KW-0812">Transmembrane</keyword>
<keyword id="KW-1133">Transmembrane helix</keyword>
<keyword id="KW-0813">Transport</keyword>
<keyword id="KW-0816">Tricarboxylic acid cycle</keyword>
<evidence type="ECO:0000250" key="1"/>
<accession>Q4UKC3</accession>
<organism>
    <name type="scientific">Rickettsia felis (strain ATCC VR-1525 / URRWXCal2)</name>
    <name type="common">Rickettsia azadi</name>
    <dbReference type="NCBI Taxonomy" id="315456"/>
    <lineage>
        <taxon>Bacteria</taxon>
        <taxon>Pseudomonadati</taxon>
        <taxon>Pseudomonadota</taxon>
        <taxon>Alphaproteobacteria</taxon>
        <taxon>Rickettsiales</taxon>
        <taxon>Rickettsiaceae</taxon>
        <taxon>Rickettsieae</taxon>
        <taxon>Rickettsia</taxon>
        <taxon>spotted fever group</taxon>
    </lineage>
</organism>
<feature type="chain" id="PRO_0000280980" description="Succinate dehydrogenase hydrophobic membrane anchor subunit">
    <location>
        <begin position="1"/>
        <end position="120"/>
    </location>
</feature>
<feature type="topological domain" description="Cytoplasmic" evidence="1">
    <location>
        <begin position="1"/>
        <end position="19"/>
    </location>
</feature>
<feature type="transmembrane region" description="Helical" evidence="1">
    <location>
        <begin position="20"/>
        <end position="40"/>
    </location>
</feature>
<feature type="topological domain" description="Periplasmic" evidence="1">
    <location>
        <begin position="41"/>
        <end position="62"/>
    </location>
</feature>
<feature type="transmembrane region" description="Helical" evidence="1">
    <location>
        <begin position="63"/>
        <end position="84"/>
    </location>
</feature>
<feature type="topological domain" description="Cytoplasmic" evidence="1">
    <location>
        <begin position="85"/>
        <end position="94"/>
    </location>
</feature>
<feature type="transmembrane region" description="Helical" evidence="1">
    <location>
        <begin position="95"/>
        <end position="118"/>
    </location>
</feature>
<feature type="binding site" description="axial binding residue" evidence="1">
    <location>
        <position position="75"/>
    </location>
    <ligand>
        <name>heme</name>
        <dbReference type="ChEBI" id="CHEBI:30413"/>
        <note>ligand shared with second transmembrane subunit</note>
    </ligand>
    <ligandPart>
        <name>Fe</name>
        <dbReference type="ChEBI" id="CHEBI:18248"/>
    </ligandPart>
</feature>
<feature type="binding site" evidence="1">
    <location>
        <position position="87"/>
    </location>
    <ligand>
        <name>a ubiquinone</name>
        <dbReference type="ChEBI" id="CHEBI:16389"/>
    </ligand>
</feature>
<proteinExistence type="inferred from homology"/>
<protein>
    <recommendedName>
        <fullName>Succinate dehydrogenase hydrophobic membrane anchor subunit</fullName>
    </recommendedName>
</protein>
<comment type="function">
    <text evidence="1">Membrane-anchoring subunit of succinate dehydrogenase (SDH).</text>
</comment>
<comment type="cofactor">
    <cofactor evidence="1">
        <name>heme</name>
        <dbReference type="ChEBI" id="CHEBI:30413"/>
    </cofactor>
    <text evidence="1">The heme is bound between the two transmembrane subunits.</text>
</comment>
<comment type="pathway">
    <text>Carbohydrate metabolism; tricarboxylic acid cycle.</text>
</comment>
<comment type="subunit">
    <text evidence="1">Part of an enzyme complex containing four subunits: a flavoprotein, an iron-sulfur protein, plus two membrane-anchoring proteins, SdhC and SdhD.</text>
</comment>
<comment type="subcellular location">
    <subcellularLocation>
        <location>Cell inner membrane</location>
        <topology>Multi-pass membrane protein</topology>
    </subcellularLocation>
</comment>
<dbReference type="EMBL" id="CP000053">
    <property type="protein sequence ID" value="AAY62012.1"/>
    <property type="molecule type" value="Genomic_DNA"/>
</dbReference>
<dbReference type="SMR" id="Q4UKC3"/>
<dbReference type="STRING" id="315456.RF_1161"/>
<dbReference type="KEGG" id="rfe:RF_1161"/>
<dbReference type="eggNOG" id="COG2142">
    <property type="taxonomic scope" value="Bacteria"/>
</dbReference>
<dbReference type="HOGENOM" id="CLU_151315_0_2_5"/>
<dbReference type="OrthoDB" id="9809280at2"/>
<dbReference type="UniPathway" id="UPA00223"/>
<dbReference type="Proteomes" id="UP000008548">
    <property type="component" value="Chromosome"/>
</dbReference>
<dbReference type="GO" id="GO:0005886">
    <property type="term" value="C:plasma membrane"/>
    <property type="evidence" value="ECO:0007669"/>
    <property type="project" value="UniProtKB-SubCell"/>
</dbReference>
<dbReference type="GO" id="GO:0009055">
    <property type="term" value="F:electron transfer activity"/>
    <property type="evidence" value="ECO:0007669"/>
    <property type="project" value="TreeGrafter"/>
</dbReference>
<dbReference type="GO" id="GO:0020037">
    <property type="term" value="F:heme binding"/>
    <property type="evidence" value="ECO:0007669"/>
    <property type="project" value="InterPro"/>
</dbReference>
<dbReference type="GO" id="GO:0046872">
    <property type="term" value="F:metal ion binding"/>
    <property type="evidence" value="ECO:0007669"/>
    <property type="project" value="UniProtKB-KW"/>
</dbReference>
<dbReference type="GO" id="GO:0017004">
    <property type="term" value="P:cytochrome complex assembly"/>
    <property type="evidence" value="ECO:0007669"/>
    <property type="project" value="TreeGrafter"/>
</dbReference>
<dbReference type="GO" id="GO:0006099">
    <property type="term" value="P:tricarboxylic acid cycle"/>
    <property type="evidence" value="ECO:0007669"/>
    <property type="project" value="UniProtKB-UniPathway"/>
</dbReference>
<dbReference type="CDD" id="cd03495">
    <property type="entry name" value="SQR_TypeC_SdhD_like"/>
    <property type="match status" value="1"/>
</dbReference>
<dbReference type="Gene3D" id="1.20.1300.10">
    <property type="entry name" value="Fumarate reductase/succinate dehydrogenase, transmembrane subunit"/>
    <property type="match status" value="1"/>
</dbReference>
<dbReference type="InterPro" id="IPR034804">
    <property type="entry name" value="SQR/QFR_C/D"/>
</dbReference>
<dbReference type="InterPro" id="IPR014312">
    <property type="entry name" value="Succ_DH_anchor"/>
</dbReference>
<dbReference type="InterPro" id="IPR000701">
    <property type="entry name" value="SuccDH_FuR_B_TM-su"/>
</dbReference>
<dbReference type="NCBIfam" id="TIGR02968">
    <property type="entry name" value="succ_dehyd_anc"/>
    <property type="match status" value="1"/>
</dbReference>
<dbReference type="PANTHER" id="PTHR38689">
    <property type="entry name" value="SUCCINATE DEHYDROGENASE HYDROPHOBIC MEMBRANE ANCHOR SUBUNIT"/>
    <property type="match status" value="1"/>
</dbReference>
<dbReference type="PANTHER" id="PTHR38689:SF1">
    <property type="entry name" value="SUCCINATE DEHYDROGENASE HYDROPHOBIC MEMBRANE ANCHOR SUBUNIT"/>
    <property type="match status" value="1"/>
</dbReference>
<dbReference type="Pfam" id="PF01127">
    <property type="entry name" value="Sdh_cyt"/>
    <property type="match status" value="1"/>
</dbReference>
<dbReference type="SUPFAM" id="SSF81343">
    <property type="entry name" value="Fumarate reductase respiratory complex transmembrane subunits"/>
    <property type="match status" value="1"/>
</dbReference>